<sequence length="40" mass="4420">MITDVQLAIFSNVLGVFLFLLVVAYHYINANTGKPIPKAK</sequence>
<reference evidence="5" key="1">
    <citation type="journal article" date="2007" name="Nature">
        <title>Evolution of genes and genomes on the Drosophila phylogeny.</title>
        <authorList>
            <consortium name="Drosophila 12 genomes consortium"/>
        </authorList>
    </citation>
    <scope>NUCLEOTIDE SEQUENCE [LARGE SCALE GENOMIC DNA]</scope>
    <source>
        <strain evidence="5">Tucson 14024-0371.13</strain>
    </source>
</reference>
<gene>
    <name type="ORF">GF13081</name>
</gene>
<feature type="chain" id="PRO_0000386608" description="Dolichyl-diphosphooligosaccharide--protein glycosyltransferase subunit 4">
    <location>
        <begin position="1"/>
        <end position="40"/>
    </location>
</feature>
<feature type="topological domain" description="Lumenal" evidence="4">
    <location>
        <begin position="1"/>
        <end position="4"/>
    </location>
</feature>
<feature type="transmembrane region" description="Helical" evidence="4">
    <location>
        <begin position="5"/>
        <end position="25"/>
    </location>
</feature>
<feature type="topological domain" description="Cytoplasmic" evidence="4">
    <location>
        <begin position="26"/>
        <end position="40"/>
    </location>
</feature>
<keyword id="KW-0256">Endoplasmic reticulum</keyword>
<keyword id="KW-0472">Membrane</keyword>
<keyword id="KW-1185">Reference proteome</keyword>
<keyword id="KW-0735">Signal-anchor</keyword>
<keyword id="KW-0812">Transmembrane</keyword>
<keyword id="KW-1133">Transmembrane helix</keyword>
<evidence type="ECO:0000250" key="1"/>
<evidence type="ECO:0000250" key="2">
    <source>
        <dbReference type="UniProtKB" id="P0C6T2"/>
    </source>
</evidence>
<evidence type="ECO:0000250" key="3">
    <source>
        <dbReference type="UniProtKB" id="Q99380"/>
    </source>
</evidence>
<evidence type="ECO:0000255" key="4"/>
<evidence type="ECO:0000312" key="5">
    <source>
        <dbReference type="EMBL" id="EDV36686.1"/>
    </source>
</evidence>
<comment type="function">
    <text evidence="2">Subunit of the oligosaccharyl transferase (OST) complex that catalyzes the initial transfer of a defined glycan (Glc(3)Man(9)GlcNAc(2) in eukaryotes) from the lipid carrier dolichol-pyrophosphate to an asparagine residue within an Asn-X-Ser/Thr consensus motif in nascent polypeptide chains, the first step in protein N-glycosylation. N-glycosylation occurs cotranslationally and the complex associates with the Sec61 complex at the channel-forming translocon complex that mediates protein translocation across the endoplasmic reticulum (ER). All subunits are required for a maximal enzyme activity.</text>
</comment>
<comment type="subunit">
    <text evidence="2">Component of the oligosaccharyltransferase (OST) complex.</text>
</comment>
<comment type="subcellular location">
    <subcellularLocation>
        <location evidence="1">Endoplasmic reticulum membrane</location>
        <topology evidence="1">Single-pass type III membrane protein</topology>
    </subcellularLocation>
</comment>
<comment type="similarity">
    <text evidence="4">Belongs to the OST4 family.</text>
</comment>
<organism>
    <name type="scientific">Drosophila ananassae</name>
    <name type="common">Fruit fly</name>
    <dbReference type="NCBI Taxonomy" id="7217"/>
    <lineage>
        <taxon>Eukaryota</taxon>
        <taxon>Metazoa</taxon>
        <taxon>Ecdysozoa</taxon>
        <taxon>Arthropoda</taxon>
        <taxon>Hexapoda</taxon>
        <taxon>Insecta</taxon>
        <taxon>Pterygota</taxon>
        <taxon>Neoptera</taxon>
        <taxon>Endopterygota</taxon>
        <taxon>Diptera</taxon>
        <taxon>Brachycera</taxon>
        <taxon>Muscomorpha</taxon>
        <taxon>Ephydroidea</taxon>
        <taxon>Drosophilidae</taxon>
        <taxon>Drosophila</taxon>
        <taxon>Sophophora</taxon>
    </lineage>
</organism>
<proteinExistence type="inferred from homology"/>
<name>OST4_DROAN</name>
<accession>B3MFK1</accession>
<protein>
    <recommendedName>
        <fullName evidence="3">Dolichyl-diphosphooligosaccharide--protein glycosyltransferase subunit 4</fullName>
    </recommendedName>
</protein>
<dbReference type="EMBL" id="CH902619">
    <property type="protein sequence ID" value="EDV36686.1"/>
    <property type="molecule type" value="Genomic_DNA"/>
</dbReference>
<dbReference type="SMR" id="B3MFK1"/>
<dbReference type="FunCoup" id="B3MFK1">
    <property type="interactions" value="107"/>
</dbReference>
<dbReference type="STRING" id="7217.B3MFK1"/>
<dbReference type="EnsemblMetazoa" id="FBtr0117781">
    <property type="protein sequence ID" value="FBpp0116273"/>
    <property type="gene ID" value="FBgn0090114"/>
</dbReference>
<dbReference type="EnsemblMetazoa" id="XM_001959828.4">
    <property type="protein sequence ID" value="XP_001959864.1"/>
    <property type="gene ID" value="LOC6495924"/>
</dbReference>
<dbReference type="GeneID" id="6495924"/>
<dbReference type="KEGG" id="dan:6495924"/>
<dbReference type="eggNOG" id="ENOG502TACJ">
    <property type="taxonomic scope" value="Eukaryota"/>
</dbReference>
<dbReference type="HOGENOM" id="CLU_186352_2_0_1"/>
<dbReference type="InParanoid" id="B3MFK1"/>
<dbReference type="PhylomeDB" id="B3MFK1"/>
<dbReference type="Proteomes" id="UP000007801">
    <property type="component" value="Unassembled WGS sequence"/>
</dbReference>
<dbReference type="GO" id="GO:0008250">
    <property type="term" value="C:oligosaccharyltransferase complex"/>
    <property type="evidence" value="ECO:0000250"/>
    <property type="project" value="UniProtKB"/>
</dbReference>
<dbReference type="GO" id="GO:0006487">
    <property type="term" value="P:protein N-linked glycosylation"/>
    <property type="evidence" value="ECO:0000250"/>
    <property type="project" value="UniProtKB"/>
</dbReference>
<dbReference type="GO" id="GO:0018279">
    <property type="term" value="P:protein N-linked glycosylation via asparagine"/>
    <property type="evidence" value="ECO:0007669"/>
    <property type="project" value="TreeGrafter"/>
</dbReference>
<dbReference type="InterPro" id="IPR018943">
    <property type="entry name" value="Oligosaccaryltransferase"/>
</dbReference>
<dbReference type="InterPro" id="IPR051307">
    <property type="entry name" value="OST4"/>
</dbReference>
<dbReference type="InterPro" id="IPR036330">
    <property type="entry name" value="Ost4p_sf"/>
</dbReference>
<dbReference type="PANTHER" id="PTHR48164">
    <property type="entry name" value="DOLICHYL-DIPHOSPHOOLIGOSACCHARIDE--PROTEIN GLYCOSYLTRANSFERASE SUBUNIT 4"/>
    <property type="match status" value="1"/>
</dbReference>
<dbReference type="PANTHER" id="PTHR48164:SF1">
    <property type="entry name" value="DOLICHYL-DIPHOSPHOOLIGOSACCHARIDE--PROTEIN GLYCOSYLTRANSFERASE SUBUNIT 4"/>
    <property type="match status" value="1"/>
</dbReference>
<dbReference type="Pfam" id="PF10215">
    <property type="entry name" value="Ost4"/>
    <property type="match status" value="1"/>
</dbReference>
<dbReference type="SUPFAM" id="SSF103464">
    <property type="entry name" value="Oligosaccharyltransferase subunit ost4p"/>
    <property type="match status" value="1"/>
</dbReference>